<gene>
    <name type="primary">RPL11</name>
</gene>
<reference key="1">
    <citation type="submission" date="2004-01" db="EMBL/GenBank/DDBJ databases">
        <title>Gene expression in normal chinchilla middle ear mucosa.</title>
        <authorList>
            <person name="Erdos G."/>
            <person name="Hu F.Z."/>
            <person name="Donfack J."/>
            <person name="Ahmed A.I."/>
            <person name="Preston R.A."/>
            <person name="Hayes J.D."/>
            <person name="Post J.C."/>
            <person name="Ehrlich G.D."/>
        </authorList>
    </citation>
    <scope>NUCLEOTIDE SEQUENCE [LARGE SCALE MRNA]</scope>
    <source>
        <tissue>Middle ear mucosa</tissue>
    </source>
</reference>
<keyword id="KW-0007">Acetylation</keyword>
<keyword id="KW-0963">Cytoplasm</keyword>
<keyword id="KW-1017">Isopeptide bond</keyword>
<keyword id="KW-0539">Nucleus</keyword>
<keyword id="KW-0597">Phosphoprotein</keyword>
<keyword id="KW-1185">Reference proteome</keyword>
<keyword id="KW-0687">Ribonucleoprotein</keyword>
<keyword id="KW-0689">Ribosomal protein</keyword>
<keyword id="KW-0694">RNA-binding</keyword>
<keyword id="KW-0699">rRNA-binding</keyword>
<keyword id="KW-0832">Ubl conjugation</keyword>
<protein>
    <recommendedName>
        <fullName evidence="3">Large ribosomal subunit protein uL5</fullName>
    </recommendedName>
    <alternativeName>
        <fullName>60S ribosomal protein L11</fullName>
    </alternativeName>
</protein>
<organism>
    <name type="scientific">Chinchilla lanigera</name>
    <name type="common">Long-tailed chinchilla</name>
    <name type="synonym">Chinchilla villidera</name>
    <dbReference type="NCBI Taxonomy" id="34839"/>
    <lineage>
        <taxon>Eukaryota</taxon>
        <taxon>Metazoa</taxon>
        <taxon>Chordata</taxon>
        <taxon>Craniata</taxon>
        <taxon>Vertebrata</taxon>
        <taxon>Euteleostomi</taxon>
        <taxon>Mammalia</taxon>
        <taxon>Eutheria</taxon>
        <taxon>Euarchontoglires</taxon>
        <taxon>Glires</taxon>
        <taxon>Rodentia</taxon>
        <taxon>Hystricomorpha</taxon>
        <taxon>Chinchillidae</taxon>
        <taxon>Chinchilla</taxon>
    </lineage>
</organism>
<evidence type="ECO:0000250" key="1">
    <source>
        <dbReference type="UniProtKB" id="P62913"/>
    </source>
</evidence>
<evidence type="ECO:0000250" key="2">
    <source>
        <dbReference type="UniProtKB" id="Q9CXW4"/>
    </source>
</evidence>
<evidence type="ECO:0000305" key="3"/>
<proteinExistence type="evidence at transcript level"/>
<comment type="function">
    <text evidence="1">Component of the ribosome, a large ribonucleoprotein complex responsible for the synthesis of proteins in the cell. The small ribosomal subunit (SSU) binds messenger RNAs (mRNAs) and translates the encoded message by selecting cognate aminoacyl-transfer RNA (tRNA) molecules. The large subunit (LSU) contains the ribosomal catalytic site termed the peptidyl transferase center (PTC), which catalyzes the formation of peptide bonds, thereby polymerizing the amino acids delivered by tRNAs into a polypeptide chain. The nascent polypeptides leave the ribosome through a tunnel in the LSU and interact with protein factors that function in enzymatic processing, targeting, and the membrane insertion of nascent chains at the exit of the ribosomal tunnel. As part of the 5S RNP/5S ribonucleoprotein particle it is an essential component of the LSU, required for its formation and the maturation of rRNAs. It also couples ribosome biogenesis to p53/TP53 activation. As part of the 5S RNP it accumulates in the nucleoplasm and inhibits MDM2, when ribosome biogenesis is perturbed, mediating the stabilization and the activation of TP53. Promotes nucleolar location of PML.</text>
</comment>
<comment type="subunit">
    <text evidence="1 2">Component of the large ribosomal subunit (LSU) (By similarity). Part of the 5S RNP complex, which is a LSU subcomplex composed of the 5S RNA, RPL5 and RPL11 (By similarity). Component of a hexameric 5S RNP precursor complex, composed of 5S RNA, RRS1, RPF2/BXDC1, RPL5, RPL11 and HEATR3; this complex acts as a precursor for ribosome assembly (By similarity). Interacts with PML (By similarity). Interacts with MDM2 (via its RanBP2-type zinc finger domain); negatively regulates MDM2-mediated TP53 ubiquitination and degradation (By similarity). Interacts with NOP53; retains RPL11 into the nucleolus (By similarity).</text>
</comment>
<comment type="subcellular location">
    <subcellularLocation>
        <location evidence="2">Nucleus</location>
        <location evidence="2">Nucleolus</location>
    </subcellularLocation>
    <subcellularLocation>
        <location evidence="2">Cytoplasm</location>
    </subcellularLocation>
</comment>
<comment type="similarity">
    <text evidence="3">Belongs to the universal ribosomal protein uL5 family.</text>
</comment>
<accession>Q6QMZ8</accession>
<dbReference type="EMBL" id="AY533222">
    <property type="protein sequence ID" value="AAS59424.1"/>
    <property type="molecule type" value="mRNA"/>
</dbReference>
<dbReference type="RefSeq" id="NP_001269300.1">
    <property type="nucleotide sequence ID" value="NM_001282371.1"/>
</dbReference>
<dbReference type="SMR" id="Q6QMZ8"/>
<dbReference type="IntAct" id="Q6QMZ8">
    <property type="interactions" value="1"/>
</dbReference>
<dbReference type="MINT" id="Q6QMZ8"/>
<dbReference type="Ensembl" id="ENSCLAT00000018333.1">
    <property type="protein sequence ID" value="ENSCLAP00000018154.1"/>
    <property type="gene ID" value="ENSCLAG00000012453.1"/>
</dbReference>
<dbReference type="GeneID" id="102017736"/>
<dbReference type="CTD" id="6135"/>
<dbReference type="GeneTree" id="ENSGT00910000144211"/>
<dbReference type="OMA" id="NPMKELK"/>
<dbReference type="OrthoDB" id="1734943at2759"/>
<dbReference type="Proteomes" id="UP000694398">
    <property type="component" value="Unassembled WGS sequence"/>
</dbReference>
<dbReference type="GO" id="GO:0005737">
    <property type="term" value="C:cytoplasm"/>
    <property type="evidence" value="ECO:0000250"/>
    <property type="project" value="UniProtKB"/>
</dbReference>
<dbReference type="GO" id="GO:0005730">
    <property type="term" value="C:nucleolus"/>
    <property type="evidence" value="ECO:0000250"/>
    <property type="project" value="UniProtKB"/>
</dbReference>
<dbReference type="GO" id="GO:0005654">
    <property type="term" value="C:nucleoplasm"/>
    <property type="evidence" value="ECO:0000250"/>
    <property type="project" value="UniProtKB"/>
</dbReference>
<dbReference type="GO" id="GO:1990904">
    <property type="term" value="C:ribonucleoprotein complex"/>
    <property type="evidence" value="ECO:0007669"/>
    <property type="project" value="UniProtKB-KW"/>
</dbReference>
<dbReference type="GO" id="GO:0005840">
    <property type="term" value="C:ribosome"/>
    <property type="evidence" value="ECO:0007669"/>
    <property type="project" value="UniProtKB-KW"/>
</dbReference>
<dbReference type="GO" id="GO:0019843">
    <property type="term" value="F:rRNA binding"/>
    <property type="evidence" value="ECO:0007669"/>
    <property type="project" value="UniProtKB-KW"/>
</dbReference>
<dbReference type="GO" id="GO:0003735">
    <property type="term" value="F:structural constituent of ribosome"/>
    <property type="evidence" value="ECO:0007669"/>
    <property type="project" value="InterPro"/>
</dbReference>
<dbReference type="GO" id="GO:0032435">
    <property type="term" value="P:negative regulation of proteasomal ubiquitin-dependent protein catabolic process"/>
    <property type="evidence" value="ECO:0000250"/>
    <property type="project" value="UniProtKB"/>
</dbReference>
<dbReference type="GO" id="GO:1901798">
    <property type="term" value="P:positive regulation of signal transduction by p53 class mediator"/>
    <property type="evidence" value="ECO:0000250"/>
    <property type="project" value="UniProtKB"/>
</dbReference>
<dbReference type="GO" id="GO:0034504">
    <property type="term" value="P:protein localization to nucleus"/>
    <property type="evidence" value="ECO:0000250"/>
    <property type="project" value="UniProtKB"/>
</dbReference>
<dbReference type="GO" id="GO:0006412">
    <property type="term" value="P:translation"/>
    <property type="evidence" value="ECO:0007669"/>
    <property type="project" value="InterPro"/>
</dbReference>
<dbReference type="FunFam" id="3.30.1440.10:FF:000002">
    <property type="entry name" value="60S ribosomal protein L11"/>
    <property type="match status" value="1"/>
</dbReference>
<dbReference type="Gene3D" id="3.30.1440.10">
    <property type="match status" value="1"/>
</dbReference>
<dbReference type="InterPro" id="IPR002132">
    <property type="entry name" value="Ribosomal_uL5"/>
</dbReference>
<dbReference type="InterPro" id="IPR031309">
    <property type="entry name" value="Ribosomal_uL5_C"/>
</dbReference>
<dbReference type="InterPro" id="IPR020929">
    <property type="entry name" value="Ribosomal_uL5_CS"/>
</dbReference>
<dbReference type="InterPro" id="IPR022803">
    <property type="entry name" value="Ribosomal_uL5_dom_sf"/>
</dbReference>
<dbReference type="InterPro" id="IPR031310">
    <property type="entry name" value="Ribosomal_uL5_N"/>
</dbReference>
<dbReference type="NCBIfam" id="NF003258">
    <property type="entry name" value="PRK04219.1"/>
    <property type="match status" value="1"/>
</dbReference>
<dbReference type="PANTHER" id="PTHR11994">
    <property type="entry name" value="60S RIBOSOMAL PROTEIN L11-RELATED"/>
    <property type="match status" value="1"/>
</dbReference>
<dbReference type="Pfam" id="PF00281">
    <property type="entry name" value="Ribosomal_L5"/>
    <property type="match status" value="1"/>
</dbReference>
<dbReference type="Pfam" id="PF00673">
    <property type="entry name" value="Ribosomal_L5_C"/>
    <property type="match status" value="1"/>
</dbReference>
<dbReference type="PIRSF" id="PIRSF002161">
    <property type="entry name" value="Ribosomal_L5"/>
    <property type="match status" value="1"/>
</dbReference>
<dbReference type="SUPFAM" id="SSF55282">
    <property type="entry name" value="RL5-like"/>
    <property type="match status" value="1"/>
</dbReference>
<dbReference type="PROSITE" id="PS00358">
    <property type="entry name" value="RIBOSOMAL_L5"/>
    <property type="match status" value="1"/>
</dbReference>
<feature type="initiator methionine" description="Removed" evidence="1">
    <location>
        <position position="1"/>
    </location>
</feature>
<feature type="chain" id="PRO_0000125081" description="Large ribosomal subunit protein uL5">
    <location>
        <begin position="2"/>
        <end position="178"/>
    </location>
</feature>
<feature type="modified residue" description="N-acetylalanine" evidence="1">
    <location>
        <position position="2"/>
    </location>
</feature>
<feature type="modified residue" description="Phosphothreonine" evidence="1">
    <location>
        <position position="44"/>
    </location>
</feature>
<feature type="modified residue" description="Phosphothreonine" evidence="1">
    <location>
        <position position="47"/>
    </location>
</feature>
<feature type="modified residue" description="N6-acetyllysine; alternate" evidence="1">
    <location>
        <position position="52"/>
    </location>
</feature>
<feature type="modified residue" description="N6-acetyllysine" evidence="1">
    <location>
        <position position="85"/>
    </location>
</feature>
<feature type="cross-link" description="Glycyl lysine isopeptide (Lys-Gly) (interchain with G-Cter in SUMO2)" evidence="1">
    <location>
        <position position="38"/>
    </location>
</feature>
<feature type="cross-link" description="Glycyl lysine isopeptide (Lys-Gly) (interchain with G-Cter in SUMO2); alternate" evidence="1">
    <location>
        <position position="52"/>
    </location>
</feature>
<feature type="cross-link" description="Glycyl lysine isopeptide (Lys-Gly) (interchain with G-Cter in SUMO2)" evidence="1">
    <location>
        <position position="154"/>
    </location>
</feature>
<name>RL11_CHILA</name>
<sequence>MAQDQGEKENPMRELRIRKLCLNICVGESGDRLTRAAKVLEQLTGQTPVFSKARYTVRSFGIRRNEKIAVHCTVRGAKAEEILEKGLKVREYELRKNNFSDTGNFGFGIQEHIDLGIKYDPSIGIYGLDFYVVLGRPGFSIADKKRRTGCIGAKHRISKEEAMRWFQQKYDGIILPGK</sequence>